<protein>
    <recommendedName>
        <fullName evidence="1">Small ribosomal subunit protein uS17</fullName>
    </recommendedName>
    <alternativeName>
        <fullName evidence="2">30S ribosomal protein S17</fullName>
    </alternativeName>
</protein>
<keyword id="KW-0687">Ribonucleoprotein</keyword>
<keyword id="KW-0689">Ribosomal protein</keyword>
<keyword id="KW-0694">RNA-binding</keyword>
<keyword id="KW-0699">rRNA-binding</keyword>
<evidence type="ECO:0000255" key="1">
    <source>
        <dbReference type="HAMAP-Rule" id="MF_01345"/>
    </source>
</evidence>
<evidence type="ECO:0000305" key="2"/>
<name>RS17_RICCK</name>
<organism>
    <name type="scientific">Rickettsia canadensis (strain McKiel)</name>
    <dbReference type="NCBI Taxonomy" id="293613"/>
    <lineage>
        <taxon>Bacteria</taxon>
        <taxon>Pseudomonadati</taxon>
        <taxon>Pseudomonadota</taxon>
        <taxon>Alphaproteobacteria</taxon>
        <taxon>Rickettsiales</taxon>
        <taxon>Rickettsiaceae</taxon>
        <taxon>Rickettsieae</taxon>
        <taxon>Rickettsia</taxon>
        <taxon>belli group</taxon>
    </lineage>
</organism>
<sequence length="77" mass="8859">MPKRVLQGVVISSKADKTVTVKVERKFKHPIYKKFVKVSKKYAAHDSENRYQEGDKVSIIESRPISKTKTWIVVNGK</sequence>
<gene>
    <name evidence="1" type="primary">rpsQ</name>
    <name type="ordered locus">A1E_04325</name>
</gene>
<reference key="1">
    <citation type="submission" date="2007-09" db="EMBL/GenBank/DDBJ databases">
        <title>Complete genome sequence of Rickettsia canadensis.</title>
        <authorList>
            <person name="Madan A."/>
            <person name="Fahey J."/>
            <person name="Helton E."/>
            <person name="Ketteman M."/>
            <person name="Madan A."/>
            <person name="Rodrigues S."/>
            <person name="Sanchez A."/>
            <person name="Whiting M."/>
            <person name="Dasch G."/>
            <person name="Eremeeva M."/>
        </authorList>
    </citation>
    <scope>NUCLEOTIDE SEQUENCE [LARGE SCALE GENOMIC DNA]</scope>
    <source>
        <strain>McKiel</strain>
    </source>
</reference>
<dbReference type="EMBL" id="CP000409">
    <property type="protein sequence ID" value="ABV73790.1"/>
    <property type="molecule type" value="Genomic_DNA"/>
</dbReference>
<dbReference type="RefSeq" id="WP_012148985.1">
    <property type="nucleotide sequence ID" value="NC_009879.1"/>
</dbReference>
<dbReference type="SMR" id="A8EZK7"/>
<dbReference type="STRING" id="293613.A1E_04325"/>
<dbReference type="KEGG" id="rcm:A1E_04325"/>
<dbReference type="eggNOG" id="COG0186">
    <property type="taxonomic scope" value="Bacteria"/>
</dbReference>
<dbReference type="HOGENOM" id="CLU_073626_1_1_5"/>
<dbReference type="Proteomes" id="UP000007056">
    <property type="component" value="Chromosome"/>
</dbReference>
<dbReference type="GO" id="GO:0022627">
    <property type="term" value="C:cytosolic small ribosomal subunit"/>
    <property type="evidence" value="ECO:0007669"/>
    <property type="project" value="TreeGrafter"/>
</dbReference>
<dbReference type="GO" id="GO:0019843">
    <property type="term" value="F:rRNA binding"/>
    <property type="evidence" value="ECO:0007669"/>
    <property type="project" value="UniProtKB-UniRule"/>
</dbReference>
<dbReference type="GO" id="GO:0003735">
    <property type="term" value="F:structural constituent of ribosome"/>
    <property type="evidence" value="ECO:0007669"/>
    <property type="project" value="InterPro"/>
</dbReference>
<dbReference type="GO" id="GO:0006412">
    <property type="term" value="P:translation"/>
    <property type="evidence" value="ECO:0007669"/>
    <property type="project" value="UniProtKB-UniRule"/>
</dbReference>
<dbReference type="CDD" id="cd00364">
    <property type="entry name" value="Ribosomal_uS17"/>
    <property type="match status" value="1"/>
</dbReference>
<dbReference type="Gene3D" id="2.40.50.140">
    <property type="entry name" value="Nucleic acid-binding proteins"/>
    <property type="match status" value="1"/>
</dbReference>
<dbReference type="HAMAP" id="MF_01345_B">
    <property type="entry name" value="Ribosomal_uS17_B"/>
    <property type="match status" value="1"/>
</dbReference>
<dbReference type="InterPro" id="IPR012340">
    <property type="entry name" value="NA-bd_OB-fold"/>
</dbReference>
<dbReference type="InterPro" id="IPR000266">
    <property type="entry name" value="Ribosomal_uS17"/>
</dbReference>
<dbReference type="InterPro" id="IPR019984">
    <property type="entry name" value="Ribosomal_uS17_bact/chlr"/>
</dbReference>
<dbReference type="InterPro" id="IPR019979">
    <property type="entry name" value="Ribosomal_uS17_CS"/>
</dbReference>
<dbReference type="NCBIfam" id="NF004123">
    <property type="entry name" value="PRK05610.1"/>
    <property type="match status" value="1"/>
</dbReference>
<dbReference type="NCBIfam" id="TIGR03635">
    <property type="entry name" value="uS17_bact"/>
    <property type="match status" value="1"/>
</dbReference>
<dbReference type="PANTHER" id="PTHR10744">
    <property type="entry name" value="40S RIBOSOMAL PROTEIN S11 FAMILY MEMBER"/>
    <property type="match status" value="1"/>
</dbReference>
<dbReference type="PANTHER" id="PTHR10744:SF1">
    <property type="entry name" value="SMALL RIBOSOMAL SUBUNIT PROTEIN US17M"/>
    <property type="match status" value="1"/>
</dbReference>
<dbReference type="Pfam" id="PF00366">
    <property type="entry name" value="Ribosomal_S17"/>
    <property type="match status" value="1"/>
</dbReference>
<dbReference type="PRINTS" id="PR00973">
    <property type="entry name" value="RIBOSOMALS17"/>
</dbReference>
<dbReference type="SUPFAM" id="SSF50249">
    <property type="entry name" value="Nucleic acid-binding proteins"/>
    <property type="match status" value="1"/>
</dbReference>
<dbReference type="PROSITE" id="PS00056">
    <property type="entry name" value="RIBOSOMAL_S17"/>
    <property type="match status" value="1"/>
</dbReference>
<comment type="function">
    <text evidence="1">One of the primary rRNA binding proteins, it binds specifically to the 5'-end of 16S ribosomal RNA.</text>
</comment>
<comment type="subunit">
    <text evidence="1">Part of the 30S ribosomal subunit.</text>
</comment>
<comment type="similarity">
    <text evidence="1">Belongs to the universal ribosomal protein uS17 family.</text>
</comment>
<accession>A8EZK7</accession>
<feature type="chain" id="PRO_1000055011" description="Small ribosomal subunit protein uS17">
    <location>
        <begin position="1"/>
        <end position="77"/>
    </location>
</feature>
<proteinExistence type="inferred from homology"/>